<feature type="chain" id="PRO_1000213242" description="Putative transport protein NT01EI_3867">
    <location>
        <begin position="1"/>
        <end position="552"/>
    </location>
</feature>
<feature type="transmembrane region" description="Helical" evidence="1">
    <location>
        <begin position="4"/>
        <end position="24"/>
    </location>
</feature>
<feature type="transmembrane region" description="Helical" evidence="1">
    <location>
        <begin position="26"/>
        <end position="46"/>
    </location>
</feature>
<feature type="transmembrane region" description="Helical" evidence="1">
    <location>
        <begin position="65"/>
        <end position="85"/>
    </location>
</feature>
<feature type="transmembrane region" description="Helical" evidence="1">
    <location>
        <begin position="90"/>
        <end position="112"/>
    </location>
</feature>
<feature type="transmembrane region" description="Helical" evidence="1">
    <location>
        <begin position="158"/>
        <end position="178"/>
    </location>
</feature>
<feature type="transmembrane region" description="Helical" evidence="1">
    <location>
        <begin position="371"/>
        <end position="391"/>
    </location>
</feature>
<feature type="transmembrane region" description="Helical" evidence="1">
    <location>
        <begin position="403"/>
        <end position="425"/>
    </location>
</feature>
<feature type="transmembrane region" description="Helical" evidence="1">
    <location>
        <begin position="439"/>
        <end position="459"/>
    </location>
</feature>
<feature type="transmembrane region" description="Helical" evidence="1">
    <location>
        <begin position="464"/>
        <end position="484"/>
    </location>
</feature>
<feature type="transmembrane region" description="Helical" evidence="1">
    <location>
        <begin position="493"/>
        <end position="513"/>
    </location>
</feature>
<feature type="transmembrane region" description="Helical" evidence="1">
    <location>
        <begin position="530"/>
        <end position="550"/>
    </location>
</feature>
<feature type="domain" description="RCK C-terminal 1" evidence="1">
    <location>
        <begin position="191"/>
        <end position="276"/>
    </location>
</feature>
<feature type="domain" description="RCK C-terminal 2" evidence="1">
    <location>
        <begin position="279"/>
        <end position="361"/>
    </location>
</feature>
<accession>C5BC80</accession>
<keyword id="KW-1003">Cell membrane</keyword>
<keyword id="KW-0472">Membrane</keyword>
<keyword id="KW-0677">Repeat</keyword>
<keyword id="KW-0812">Transmembrane</keyword>
<keyword id="KW-1133">Transmembrane helix</keyword>
<keyword id="KW-0813">Transport</keyword>
<name>Y3867_EDWI9</name>
<evidence type="ECO:0000255" key="1">
    <source>
        <dbReference type="HAMAP-Rule" id="MF_01016"/>
    </source>
</evidence>
<protein>
    <recommendedName>
        <fullName evidence="1">Putative transport protein NT01EI_3867</fullName>
    </recommendedName>
</protein>
<dbReference type="EMBL" id="CP001600">
    <property type="protein sequence ID" value="ACR70986.1"/>
    <property type="molecule type" value="Genomic_DNA"/>
</dbReference>
<dbReference type="RefSeq" id="WP_015873017.1">
    <property type="nucleotide sequence ID" value="NZ_CP169062.1"/>
</dbReference>
<dbReference type="SMR" id="C5BC80"/>
<dbReference type="STRING" id="67780.B6E78_10875"/>
<dbReference type="KEGG" id="eic:NT01EI_3867"/>
<dbReference type="PATRIC" id="fig|634503.3.peg.3448"/>
<dbReference type="HOGENOM" id="CLU_035023_3_1_6"/>
<dbReference type="OrthoDB" id="5166626at2"/>
<dbReference type="Proteomes" id="UP000001485">
    <property type="component" value="Chromosome"/>
</dbReference>
<dbReference type="GO" id="GO:0005886">
    <property type="term" value="C:plasma membrane"/>
    <property type="evidence" value="ECO:0007669"/>
    <property type="project" value="UniProtKB-SubCell"/>
</dbReference>
<dbReference type="GO" id="GO:0008324">
    <property type="term" value="F:monoatomic cation transmembrane transporter activity"/>
    <property type="evidence" value="ECO:0007669"/>
    <property type="project" value="InterPro"/>
</dbReference>
<dbReference type="GO" id="GO:0006813">
    <property type="term" value="P:potassium ion transport"/>
    <property type="evidence" value="ECO:0007669"/>
    <property type="project" value="InterPro"/>
</dbReference>
<dbReference type="Gene3D" id="3.30.70.1450">
    <property type="entry name" value="Regulator of K+ conductance, C-terminal domain"/>
    <property type="match status" value="2"/>
</dbReference>
<dbReference type="HAMAP" id="MF_01016">
    <property type="entry name" value="YidE"/>
    <property type="match status" value="1"/>
</dbReference>
<dbReference type="InterPro" id="IPR050144">
    <property type="entry name" value="AAE_transporter"/>
</dbReference>
<dbReference type="InterPro" id="IPR006037">
    <property type="entry name" value="RCK_C"/>
</dbReference>
<dbReference type="InterPro" id="IPR036721">
    <property type="entry name" value="RCK_C_sf"/>
</dbReference>
<dbReference type="InterPro" id="IPR023018">
    <property type="entry name" value="Transpt_YidE_put"/>
</dbReference>
<dbReference type="InterPro" id="IPR006512">
    <property type="entry name" value="YidE_YbjL"/>
</dbReference>
<dbReference type="NCBIfam" id="NF003007">
    <property type="entry name" value="PRK03818.1"/>
    <property type="match status" value="1"/>
</dbReference>
<dbReference type="NCBIfam" id="TIGR01625">
    <property type="entry name" value="YidE_YbjL_dupl"/>
    <property type="match status" value="2"/>
</dbReference>
<dbReference type="PANTHER" id="PTHR30445">
    <property type="entry name" value="K(+)_H(+) ANTIPORTER SUBUNIT KHTT"/>
    <property type="match status" value="1"/>
</dbReference>
<dbReference type="PANTHER" id="PTHR30445:SF3">
    <property type="entry name" value="TRANSPORT PROTEIN YIDE-RELATED"/>
    <property type="match status" value="1"/>
</dbReference>
<dbReference type="Pfam" id="PF06826">
    <property type="entry name" value="Asp-Al_Ex"/>
    <property type="match status" value="2"/>
</dbReference>
<dbReference type="Pfam" id="PF02080">
    <property type="entry name" value="TrkA_C"/>
    <property type="match status" value="2"/>
</dbReference>
<dbReference type="SUPFAM" id="SSF116726">
    <property type="entry name" value="TrkA C-terminal domain-like"/>
    <property type="match status" value="2"/>
</dbReference>
<dbReference type="PROSITE" id="PS51202">
    <property type="entry name" value="RCK_C"/>
    <property type="match status" value="2"/>
</dbReference>
<proteinExistence type="inferred from homology"/>
<comment type="subcellular location">
    <subcellularLocation>
        <location evidence="1">Cell membrane</location>
        <topology evidence="1">Multi-pass membrane protein</topology>
    </subcellularLocation>
</comment>
<comment type="similarity">
    <text evidence="1">Belongs to the AAE transporter (TC 2.A.81) family. YidE subfamily.</text>
</comment>
<organism>
    <name type="scientific">Edwardsiella ictaluri (strain 93-146)</name>
    <dbReference type="NCBI Taxonomy" id="634503"/>
    <lineage>
        <taxon>Bacteria</taxon>
        <taxon>Pseudomonadati</taxon>
        <taxon>Pseudomonadota</taxon>
        <taxon>Gammaproteobacteria</taxon>
        <taxon>Enterobacterales</taxon>
        <taxon>Hafniaceae</taxon>
        <taxon>Edwardsiella</taxon>
    </lineage>
</organism>
<gene>
    <name type="ordered locus">NT01EI_3867</name>
</gene>
<reference key="1">
    <citation type="submission" date="2009-03" db="EMBL/GenBank/DDBJ databases">
        <title>Complete genome sequence of Edwardsiella ictaluri 93-146.</title>
        <authorList>
            <person name="Williams M.L."/>
            <person name="Gillaspy A.F."/>
            <person name="Dyer D.W."/>
            <person name="Thune R.L."/>
            <person name="Waldbieser G.C."/>
            <person name="Schuster S.C."/>
            <person name="Gipson J."/>
            <person name="Zaitshik J."/>
            <person name="Landry C."/>
            <person name="Lawrence M.L."/>
        </authorList>
    </citation>
    <scope>NUCLEOTIDE SEQUENCE [LARGE SCALE GENOMIC DNA]</scope>
    <source>
        <strain>93-146</strain>
    </source>
</reference>
<sequence length="552" mass="59082">MSDIALTVSMLSLVAVLGLWIGNWRIYGVGLGIGGVLFGGIIVGHFAQRYQLDLNSDMLHFIQEFGLILFVYSIGIQVGPGFFSSLRVSGLRLNAFAVLMVLISGLITAAIHKLFAVPLPIILGIFSGAVTNTPALGAGQQILTDLGSNPSQIDLMGMGYAMAYPFGICGILLVIWLIRLLFRINIDAEARDFDSRNGHSHELLQTMNIMVRNPNLSGLSIQEVPILNSDTIVCSRLKRGDFLMVPLPTTQIESGDLLHLVGQKQELENARLVIGEQVDTSLSTRGTELQVSRVVVTNERVLGKKIRDLNLKQRYDVVISRLNRAGVELVAGNNATLQFGDILNLVGRPQAIDAVAAIVGNAQQKLQQVQMLPVFIGIGLGVLLGSVPLFIPGFPAALKLGLAGGPLVVALILGRIGSIGKLYWFMPPSANLALRELGIVLFLAVVGLKSGGNFIDTLLNGEGVTWIGYGILITAIPLLTAALLARLMIKMNYLTLCGMLAGAMTDPPALAFANGLHATSGAAALSYATVYPLAMFLRIMSPQLLALLFWSV</sequence>